<evidence type="ECO:0000250" key="1">
    <source>
        <dbReference type="UniProtKB" id="Q5BJM8"/>
    </source>
</evidence>
<evidence type="ECO:0000250" key="2">
    <source>
        <dbReference type="UniProtKB" id="Q8NEW0"/>
    </source>
</evidence>
<evidence type="ECO:0000250" key="3">
    <source>
        <dbReference type="UniProtKB" id="Q9JKN1"/>
    </source>
</evidence>
<evidence type="ECO:0000255" key="4"/>
<evidence type="ECO:0000256" key="5">
    <source>
        <dbReference type="SAM" id="MobiDB-lite"/>
    </source>
</evidence>
<evidence type="ECO:0000305" key="6"/>
<comment type="function">
    <text evidence="2">Zinc ion transporter mediating zinc entry from the cytosol into the lumen of organelles along the secretory pathway. By contributing to zinc ion homeostasis within the early secretory pathway, regulates the activation and folding of enzymes like alkaline phosphatases.</text>
</comment>
<comment type="catalytic activity">
    <reaction evidence="2">
        <text>Zn(2+)(in) = Zn(2+)(out)</text>
        <dbReference type="Rhea" id="RHEA:29351"/>
        <dbReference type="ChEBI" id="CHEBI:29105"/>
    </reaction>
</comment>
<comment type="subunit">
    <text evidence="2">Homooligomer.</text>
</comment>
<comment type="subcellular location">
    <subcellularLocation>
        <location evidence="2">Golgi apparatus membrane</location>
        <topology evidence="4">Multi-pass membrane protein</topology>
    </subcellularLocation>
    <subcellularLocation>
        <location evidence="3">Cytoplasmic vesicle</location>
    </subcellularLocation>
    <subcellularLocation>
        <location evidence="3">Golgi apparatus</location>
        <location evidence="3">trans-Golgi network</location>
    </subcellularLocation>
    <subcellularLocation>
        <location evidence="1">Sarcoplasmic reticulum</location>
    </subcellularLocation>
    <subcellularLocation>
        <location evidence="1">Mitochondrion</location>
    </subcellularLocation>
</comment>
<comment type="similarity">
    <text evidence="6">Belongs to the cation diffusion facilitator (CDF) transporter (TC 2.A.4) family. SLC30A subfamily.</text>
</comment>
<name>ZNT7A_XENLA</name>
<dbReference type="EMBL" id="BC094400">
    <property type="protein sequence ID" value="AAH94400.1"/>
    <property type="molecule type" value="mRNA"/>
</dbReference>
<dbReference type="RefSeq" id="NP_001089424.1">
    <property type="nucleotide sequence ID" value="NM_001095955.1"/>
</dbReference>
<dbReference type="SMR" id="Q52KD7"/>
<dbReference type="DNASU" id="734474"/>
<dbReference type="GeneID" id="734474"/>
<dbReference type="KEGG" id="xla:734474"/>
<dbReference type="AGR" id="Xenbase:XB-GENE-6256185"/>
<dbReference type="CTD" id="734474"/>
<dbReference type="Xenbase" id="XB-GENE-6256185">
    <property type="gene designation" value="slc30a7.S"/>
</dbReference>
<dbReference type="OrthoDB" id="78669at2759"/>
<dbReference type="Proteomes" id="UP000186698">
    <property type="component" value="Chromosome 4S"/>
</dbReference>
<dbReference type="Bgee" id="734474">
    <property type="expression patterns" value="Expressed in egg cell and 19 other cell types or tissues"/>
</dbReference>
<dbReference type="GO" id="GO:0031410">
    <property type="term" value="C:cytoplasmic vesicle"/>
    <property type="evidence" value="ECO:0000318"/>
    <property type="project" value="GO_Central"/>
</dbReference>
<dbReference type="GO" id="GO:0005794">
    <property type="term" value="C:Golgi apparatus"/>
    <property type="evidence" value="ECO:0000318"/>
    <property type="project" value="GO_Central"/>
</dbReference>
<dbReference type="GO" id="GO:1990674">
    <property type="term" value="C:Golgi cis cisterna membrane"/>
    <property type="evidence" value="ECO:0000250"/>
    <property type="project" value="UniProtKB"/>
</dbReference>
<dbReference type="GO" id="GO:0000139">
    <property type="term" value="C:Golgi membrane"/>
    <property type="evidence" value="ECO:0007669"/>
    <property type="project" value="UniProtKB-SubCell"/>
</dbReference>
<dbReference type="GO" id="GO:0005739">
    <property type="term" value="C:mitochondrion"/>
    <property type="evidence" value="ECO:0000250"/>
    <property type="project" value="UniProtKB"/>
</dbReference>
<dbReference type="GO" id="GO:0033017">
    <property type="term" value="C:sarcoplasmic reticulum membrane"/>
    <property type="evidence" value="ECO:0000250"/>
    <property type="project" value="UniProtKB"/>
</dbReference>
<dbReference type="GO" id="GO:0005385">
    <property type="term" value="F:zinc ion transmembrane transporter activity"/>
    <property type="evidence" value="ECO:0000250"/>
    <property type="project" value="UniProtKB"/>
</dbReference>
<dbReference type="GO" id="GO:0006882">
    <property type="term" value="P:intracellular zinc ion homeostasis"/>
    <property type="evidence" value="ECO:0000318"/>
    <property type="project" value="GO_Central"/>
</dbReference>
<dbReference type="GO" id="GO:1904257">
    <property type="term" value="P:zinc ion import into Golgi lumen"/>
    <property type="evidence" value="ECO:0000250"/>
    <property type="project" value="UniProtKB"/>
</dbReference>
<dbReference type="Gene3D" id="1.20.1510.10">
    <property type="entry name" value="Cation efflux protein transmembrane domain"/>
    <property type="match status" value="1"/>
</dbReference>
<dbReference type="InterPro" id="IPR002524">
    <property type="entry name" value="Cation_efflux"/>
</dbReference>
<dbReference type="InterPro" id="IPR027469">
    <property type="entry name" value="Cation_efflux_TMD_sf"/>
</dbReference>
<dbReference type="InterPro" id="IPR045316">
    <property type="entry name" value="Msc2-like"/>
</dbReference>
<dbReference type="NCBIfam" id="TIGR01297">
    <property type="entry name" value="CDF"/>
    <property type="match status" value="1"/>
</dbReference>
<dbReference type="PANTHER" id="PTHR45755">
    <property type="match status" value="1"/>
</dbReference>
<dbReference type="PANTHER" id="PTHR45755:SF4">
    <property type="entry name" value="ZINC TRANSPORTER 7"/>
    <property type="match status" value="1"/>
</dbReference>
<dbReference type="Pfam" id="PF01545">
    <property type="entry name" value="Cation_efflux"/>
    <property type="match status" value="1"/>
</dbReference>
<dbReference type="SUPFAM" id="SSF161111">
    <property type="entry name" value="Cation efflux protein transmembrane domain-like"/>
    <property type="match status" value="1"/>
</dbReference>
<feature type="chain" id="PRO_0000314304" description="Zinc transporter 7-A">
    <location>
        <begin position="1"/>
        <end position="386"/>
    </location>
</feature>
<feature type="topological domain" description="Cytoplasmic" evidence="6">
    <location>
        <begin position="1"/>
        <end position="37"/>
    </location>
</feature>
<feature type="transmembrane region" description="Helical" evidence="4">
    <location>
        <begin position="38"/>
        <end position="58"/>
    </location>
</feature>
<feature type="topological domain" description="Lumenal" evidence="6">
    <location>
        <begin position="59"/>
        <end position="67"/>
    </location>
</feature>
<feature type="transmembrane region" description="Helical" evidence="4">
    <location>
        <begin position="68"/>
        <end position="88"/>
    </location>
</feature>
<feature type="topological domain" description="Cytoplasmic" evidence="6">
    <location>
        <begin position="89"/>
        <end position="102"/>
    </location>
</feature>
<feature type="transmembrane region" description="Helical" evidence="4">
    <location>
        <begin position="103"/>
        <end position="123"/>
    </location>
</feature>
<feature type="topological domain" description="Lumenal" evidence="6">
    <location>
        <begin position="124"/>
        <end position="140"/>
    </location>
</feature>
<feature type="transmembrane region" description="Helical" evidence="4">
    <location>
        <begin position="141"/>
        <end position="161"/>
    </location>
</feature>
<feature type="topological domain" description="Cytoplasmic" evidence="6">
    <location>
        <begin position="162"/>
        <end position="246"/>
    </location>
</feature>
<feature type="transmembrane region" description="Helical" evidence="4">
    <location>
        <begin position="247"/>
        <end position="267"/>
    </location>
</feature>
<feature type="topological domain" description="Lumenal" evidence="6">
    <location>
        <begin position="268"/>
        <end position="272"/>
    </location>
</feature>
<feature type="transmembrane region" description="Helical" evidence="4">
    <location>
        <begin position="273"/>
        <end position="293"/>
    </location>
</feature>
<feature type="topological domain" description="Cytoplasmic" evidence="6">
    <location>
        <begin position="294"/>
        <end position="386"/>
    </location>
</feature>
<feature type="region of interest" description="His-rich loop">
    <location>
        <begin position="161"/>
        <end position="222"/>
    </location>
</feature>
<feature type="region of interest" description="Disordered" evidence="5">
    <location>
        <begin position="167"/>
        <end position="239"/>
    </location>
</feature>
<feature type="compositionally biased region" description="Basic and acidic residues" evidence="5">
    <location>
        <begin position="228"/>
        <end position="238"/>
    </location>
</feature>
<keyword id="KW-0968">Cytoplasmic vesicle</keyword>
<keyword id="KW-0333">Golgi apparatus</keyword>
<keyword id="KW-0406">Ion transport</keyword>
<keyword id="KW-0472">Membrane</keyword>
<keyword id="KW-0496">Mitochondrion</keyword>
<keyword id="KW-1185">Reference proteome</keyword>
<keyword id="KW-0703">Sarcoplasmic reticulum</keyword>
<keyword id="KW-0812">Transmembrane</keyword>
<keyword id="KW-1133">Transmembrane helix</keyword>
<keyword id="KW-0813">Transport</keyword>
<keyword id="KW-0862">Zinc</keyword>
<keyword id="KW-0864">Zinc transport</keyword>
<proteinExistence type="evidence at transcript level"/>
<gene>
    <name type="primary">slc30a7-a</name>
    <name type="synonym">znt7-a</name>
</gene>
<sequence length="386" mass="42547">MLPLSIKDDEYKPPKFNLARKVSGWIRSIFSDSTSRNLFCFLCLNLSFAFVELFYGIWSNSLGLISDSFHMFFDCTALLAGLAASVISRWKTNEAFSYGYVRAEVLAGFVNGLFLIFTAFFIFSEGVERALDTPEVHHERLLPVSIMGLLVNIIGIFVFQHGGGHGHSHESGHGHSHSLFNGAVSHGHSHGGGHGHSHEGGHGHSHSQGGGHGHSHDHSPKHGYGSSCHDEPPEEHKGSSKQILEGVFLHIVADTLGSVGVIFSTILMQRYGLMIADPICSMLIALLIFVSVIPLLKQSIGILMQRTPPALDHVLPQCYQRVQQLQGVYHLQEPHFWTLCTDVYIGTLKLVIGPEADARWILSQTHNIFTQAGVRQLYVQIDFAAI</sequence>
<protein>
    <recommendedName>
        <fullName evidence="6">Zinc transporter 7-A</fullName>
    </recommendedName>
    <alternativeName>
        <fullName>Solute carrier family 30 member 7-A</fullName>
    </alternativeName>
</protein>
<accession>Q52KD7</accession>
<reference key="1">
    <citation type="submission" date="2005-04" db="EMBL/GenBank/DDBJ databases">
        <authorList>
            <consortium name="NIH - Xenopus Gene Collection (XGC) project"/>
        </authorList>
    </citation>
    <scope>NUCLEOTIDE SEQUENCE [LARGE SCALE MRNA]</scope>
    <source>
        <tissue>Egg</tissue>
    </source>
</reference>
<organism>
    <name type="scientific">Xenopus laevis</name>
    <name type="common">African clawed frog</name>
    <dbReference type="NCBI Taxonomy" id="8355"/>
    <lineage>
        <taxon>Eukaryota</taxon>
        <taxon>Metazoa</taxon>
        <taxon>Chordata</taxon>
        <taxon>Craniata</taxon>
        <taxon>Vertebrata</taxon>
        <taxon>Euteleostomi</taxon>
        <taxon>Amphibia</taxon>
        <taxon>Batrachia</taxon>
        <taxon>Anura</taxon>
        <taxon>Pipoidea</taxon>
        <taxon>Pipidae</taxon>
        <taxon>Xenopodinae</taxon>
        <taxon>Xenopus</taxon>
        <taxon>Xenopus</taxon>
    </lineage>
</organism>